<comment type="function">
    <text evidence="1">Catalyzes the conversion of N-acetyl-diaminopimelate to diaminopimelate and acetate.</text>
</comment>
<comment type="catalytic activity">
    <reaction evidence="1">
        <text>N-acetyl-(2S,6S)-2,6-diaminopimelate + H2O = (2S,6S)-2,6-diaminopimelate + acetate</text>
        <dbReference type="Rhea" id="RHEA:20405"/>
        <dbReference type="ChEBI" id="CHEBI:15377"/>
        <dbReference type="ChEBI" id="CHEBI:30089"/>
        <dbReference type="ChEBI" id="CHEBI:57609"/>
        <dbReference type="ChEBI" id="CHEBI:58767"/>
        <dbReference type="EC" id="3.5.1.47"/>
    </reaction>
</comment>
<comment type="pathway">
    <text evidence="1">Amino-acid biosynthesis; L-lysine biosynthesis via DAP pathway; LL-2,6-diaminopimelate from (S)-tetrahydrodipicolinate (acetylase route): step 3/3.</text>
</comment>
<comment type="similarity">
    <text evidence="1">Belongs to the peptidase M20A family. N-acetyldiaminopimelate deacetylase subfamily.</text>
</comment>
<accession>C0ZGH7</accession>
<reference key="1">
    <citation type="submission" date="2005-03" db="EMBL/GenBank/DDBJ databases">
        <title>Brevibacillus brevis strain 47, complete genome.</title>
        <authorList>
            <person name="Hosoyama A."/>
            <person name="Yamada R."/>
            <person name="Hongo Y."/>
            <person name="Terui Y."/>
            <person name="Ankai A."/>
            <person name="Masuyama W."/>
            <person name="Sekiguchi M."/>
            <person name="Takeda T."/>
            <person name="Asano K."/>
            <person name="Ohji S."/>
            <person name="Ichikawa N."/>
            <person name="Narita S."/>
            <person name="Aoki N."/>
            <person name="Miura H."/>
            <person name="Matsushita S."/>
            <person name="Sekigawa T."/>
            <person name="Yamagata H."/>
            <person name="Yoshikawa H."/>
            <person name="Udaka S."/>
            <person name="Tanikawa S."/>
            <person name="Fujita N."/>
        </authorList>
    </citation>
    <scope>NUCLEOTIDE SEQUENCE [LARGE SCALE GENOMIC DNA]</scope>
    <source>
        <strain>47 / JCM 6285 / NBRC 100599</strain>
    </source>
</reference>
<name>DAPEL_BREBN</name>
<feature type="chain" id="PRO_1000187459" description="N-acetyldiaminopimelate deacetylase">
    <location>
        <begin position="1"/>
        <end position="377"/>
    </location>
</feature>
<feature type="active site" evidence="1">
    <location>
        <position position="69"/>
    </location>
</feature>
<feature type="active site" description="Proton acceptor" evidence="1">
    <location>
        <position position="128"/>
    </location>
</feature>
<sequence length="377" mass="42580">MTTSLFTQIRRDLHQIPEPGFAEVKTQQYLLDYLKKLPQERIEIKTWRTGILVKLAGTKPKRLIAWRTDMDGLPIVEETSYPFRSLHEGYMHACGHDMHMAIALGLLTHFTEHSIADDLLFLFQPAEEGPGGAWPMMESEEFAEWRPDCIFALHIAPEYPVGQIATKPGILFANTSELYIDLVGKGGHAAFPHKANDMVVAGSHLVTQLQSIISRNIDPLDSAVVTIGKLESGTKQNIIAEKSRLEGTIRTFSMESMALVKSRIESLVKGVEIGFDCQATIDYGVGYCQVYNEEQLTTDFMQWVQEQCDDVTLITCKEAMTGEDFGYFLKEIPGFLFWLGVQTPYGLHHSKIEPNEDAIEVAIRLVSRYFTWLSQQE</sequence>
<proteinExistence type="inferred from homology"/>
<organism>
    <name type="scientific">Brevibacillus brevis (strain 47 / JCM 6285 / NBRC 100599)</name>
    <dbReference type="NCBI Taxonomy" id="358681"/>
    <lineage>
        <taxon>Bacteria</taxon>
        <taxon>Bacillati</taxon>
        <taxon>Bacillota</taxon>
        <taxon>Bacilli</taxon>
        <taxon>Bacillales</taxon>
        <taxon>Paenibacillaceae</taxon>
        <taxon>Brevibacillus</taxon>
    </lineage>
</organism>
<protein>
    <recommendedName>
        <fullName evidence="1">N-acetyldiaminopimelate deacetylase</fullName>
        <ecNumber evidence="1">3.5.1.47</ecNumber>
    </recommendedName>
</protein>
<evidence type="ECO:0000255" key="1">
    <source>
        <dbReference type="HAMAP-Rule" id="MF_01692"/>
    </source>
</evidence>
<keyword id="KW-0028">Amino-acid biosynthesis</keyword>
<keyword id="KW-0220">Diaminopimelate biosynthesis</keyword>
<keyword id="KW-0378">Hydrolase</keyword>
<keyword id="KW-0457">Lysine biosynthesis</keyword>
<keyword id="KW-1185">Reference proteome</keyword>
<dbReference type="EC" id="3.5.1.47" evidence="1"/>
<dbReference type="EMBL" id="AP008955">
    <property type="protein sequence ID" value="BAH44886.1"/>
    <property type="molecule type" value="Genomic_DNA"/>
</dbReference>
<dbReference type="RefSeq" id="WP_015892165.1">
    <property type="nucleotide sequence ID" value="NC_012491.1"/>
</dbReference>
<dbReference type="SMR" id="C0ZGH7"/>
<dbReference type="STRING" id="358681.BBR47_39090"/>
<dbReference type="MEROPS" id="M20.A27"/>
<dbReference type="KEGG" id="bbe:BBR47_39090"/>
<dbReference type="eggNOG" id="COG1473">
    <property type="taxonomic scope" value="Bacteria"/>
</dbReference>
<dbReference type="HOGENOM" id="CLU_023257_0_1_9"/>
<dbReference type="UniPathway" id="UPA00034">
    <property type="reaction ID" value="UER00024"/>
</dbReference>
<dbReference type="Proteomes" id="UP000001877">
    <property type="component" value="Chromosome"/>
</dbReference>
<dbReference type="GO" id="GO:0050118">
    <property type="term" value="F:N-acetyldiaminopimelate deacetylase activity"/>
    <property type="evidence" value="ECO:0007669"/>
    <property type="project" value="UniProtKB-UniRule"/>
</dbReference>
<dbReference type="GO" id="GO:0019877">
    <property type="term" value="P:diaminopimelate biosynthetic process"/>
    <property type="evidence" value="ECO:0007669"/>
    <property type="project" value="UniProtKB-UniRule"/>
</dbReference>
<dbReference type="GO" id="GO:0009089">
    <property type="term" value="P:lysine biosynthetic process via diaminopimelate"/>
    <property type="evidence" value="ECO:0007669"/>
    <property type="project" value="UniProtKB-UniRule"/>
</dbReference>
<dbReference type="CDD" id="cd05670">
    <property type="entry name" value="M20_Acy1_YkuR-like"/>
    <property type="match status" value="1"/>
</dbReference>
<dbReference type="FunFam" id="3.30.70.360:FF:000001">
    <property type="entry name" value="N-acetyldiaminopimelate deacetylase"/>
    <property type="match status" value="1"/>
</dbReference>
<dbReference type="Gene3D" id="3.30.70.360">
    <property type="match status" value="1"/>
</dbReference>
<dbReference type="Gene3D" id="3.40.630.10">
    <property type="entry name" value="Zn peptidases"/>
    <property type="match status" value="1"/>
</dbReference>
<dbReference type="HAMAP" id="MF_01692">
    <property type="entry name" value="DapEL"/>
    <property type="match status" value="1"/>
</dbReference>
<dbReference type="InterPro" id="IPR023905">
    <property type="entry name" value="AcetylDAP_deacetylase"/>
</dbReference>
<dbReference type="InterPro" id="IPR017439">
    <property type="entry name" value="Amidohydrolase"/>
</dbReference>
<dbReference type="InterPro" id="IPR036264">
    <property type="entry name" value="Bact_exopeptidase_dim_dom"/>
</dbReference>
<dbReference type="InterPro" id="IPR002933">
    <property type="entry name" value="Peptidase_M20"/>
</dbReference>
<dbReference type="InterPro" id="IPR011650">
    <property type="entry name" value="Peptidase_M20_dimer"/>
</dbReference>
<dbReference type="NCBIfam" id="TIGR01891">
    <property type="entry name" value="amidohydrolases"/>
    <property type="match status" value="1"/>
</dbReference>
<dbReference type="PANTHER" id="PTHR11014:SF98">
    <property type="entry name" value="N-ACETYLDIAMINOPIMELATE DEACETYLASE"/>
    <property type="match status" value="1"/>
</dbReference>
<dbReference type="PANTHER" id="PTHR11014">
    <property type="entry name" value="PEPTIDASE M20 FAMILY MEMBER"/>
    <property type="match status" value="1"/>
</dbReference>
<dbReference type="Pfam" id="PF07687">
    <property type="entry name" value="M20_dimer"/>
    <property type="match status" value="1"/>
</dbReference>
<dbReference type="Pfam" id="PF01546">
    <property type="entry name" value="Peptidase_M20"/>
    <property type="match status" value="1"/>
</dbReference>
<dbReference type="PIRSF" id="PIRSF005962">
    <property type="entry name" value="Pept_M20D_amidohydro"/>
    <property type="match status" value="1"/>
</dbReference>
<dbReference type="SUPFAM" id="SSF55031">
    <property type="entry name" value="Bacterial exopeptidase dimerisation domain"/>
    <property type="match status" value="1"/>
</dbReference>
<dbReference type="SUPFAM" id="SSF53187">
    <property type="entry name" value="Zn-dependent exopeptidases"/>
    <property type="match status" value="1"/>
</dbReference>
<gene>
    <name type="ordered locus">BBR47_39090</name>
</gene>